<keyword id="KW-0217">Developmental protein</keyword>
<keyword id="KW-0221">Differentiation</keyword>
<keyword id="KW-0238">DNA-binding</keyword>
<keyword id="KW-0524">Neurogenesis</keyword>
<keyword id="KW-0539">Nucleus</keyword>
<keyword id="KW-1185">Reference proteome</keyword>
<keyword id="KW-0804">Transcription</keyword>
<keyword id="KW-0805">Transcription regulation</keyword>
<protein>
    <recommendedName>
        <fullName>Basic helix-loop-helix neural transcription factor TAP</fullName>
    </recommendedName>
    <alternativeName>
        <fullName>Protein biparous</fullName>
    </alternativeName>
    <alternativeName>
        <fullName>Target of Poxn protein</fullName>
    </alternativeName>
</protein>
<feature type="chain" id="PRO_0000127459" description="Basic helix-loop-helix neural transcription factor TAP">
    <location>
        <begin position="1"/>
        <end position="398"/>
    </location>
</feature>
<feature type="domain" description="bHLH" evidence="1">
    <location>
        <begin position="154"/>
        <end position="206"/>
    </location>
</feature>
<feature type="region of interest" description="Disordered" evidence="2">
    <location>
        <begin position="35"/>
        <end position="59"/>
    </location>
</feature>
<feature type="region of interest" description="Disordered" evidence="2">
    <location>
        <begin position="102"/>
        <end position="144"/>
    </location>
</feature>
<feature type="region of interest" description="Disordered" evidence="2">
    <location>
        <begin position="265"/>
        <end position="333"/>
    </location>
</feature>
<feature type="region of interest" description="Disordered" evidence="2">
    <location>
        <begin position="361"/>
        <end position="398"/>
    </location>
</feature>
<feature type="compositionally biased region" description="Basic residues" evidence="2">
    <location>
        <begin position="127"/>
        <end position="141"/>
    </location>
</feature>
<feature type="compositionally biased region" description="Low complexity" evidence="2">
    <location>
        <begin position="307"/>
        <end position="333"/>
    </location>
</feature>
<feature type="compositionally biased region" description="Polar residues" evidence="2">
    <location>
        <begin position="361"/>
        <end position="370"/>
    </location>
</feature>
<dbReference type="EMBL" id="AF022883">
    <property type="protein sequence ID" value="AAC80572.1"/>
    <property type="molecule type" value="mRNA"/>
</dbReference>
<dbReference type="EMBL" id="X95845">
    <property type="protein sequence ID" value="CAA65103.1"/>
    <property type="molecule type" value="mRNA"/>
</dbReference>
<dbReference type="EMBL" id="AE014296">
    <property type="protein sequence ID" value="AAF49352.1"/>
    <property type="molecule type" value="Genomic_DNA"/>
</dbReference>
<dbReference type="EMBL" id="AY119146">
    <property type="protein sequence ID" value="AAM51006.1"/>
    <property type="molecule type" value="mRNA"/>
</dbReference>
<dbReference type="RefSeq" id="NP_524124.1">
    <property type="nucleotide sequence ID" value="NM_079400.3"/>
</dbReference>
<dbReference type="SMR" id="O16867"/>
<dbReference type="BioGRID" id="65225">
    <property type="interactions" value="16"/>
</dbReference>
<dbReference type="DIP" id="DIP-21817N"/>
<dbReference type="FunCoup" id="O16867">
    <property type="interactions" value="6"/>
</dbReference>
<dbReference type="IntAct" id="O16867">
    <property type="interactions" value="11"/>
</dbReference>
<dbReference type="STRING" id="7227.FBpp0074978"/>
<dbReference type="GlyGen" id="O16867">
    <property type="glycosylation" value="1 site"/>
</dbReference>
<dbReference type="PaxDb" id="7227-FBpp0074978"/>
<dbReference type="DNASU" id="39935"/>
<dbReference type="EnsemblMetazoa" id="FBtr0075216">
    <property type="protein sequence ID" value="FBpp0074978"/>
    <property type="gene ID" value="FBgn0015550"/>
</dbReference>
<dbReference type="GeneID" id="39935"/>
<dbReference type="KEGG" id="dme:Dmel_CG7659"/>
<dbReference type="AGR" id="FB:FBgn0015550"/>
<dbReference type="CTD" id="39935"/>
<dbReference type="FlyBase" id="FBgn0015550">
    <property type="gene designation" value="tap"/>
</dbReference>
<dbReference type="VEuPathDB" id="VectorBase:FBgn0015550"/>
<dbReference type="eggNOG" id="KOG3898">
    <property type="taxonomic scope" value="Eukaryota"/>
</dbReference>
<dbReference type="GeneTree" id="ENSGT00940000169303"/>
<dbReference type="HOGENOM" id="CLU_693114_0_0_1"/>
<dbReference type="InParanoid" id="O16867"/>
<dbReference type="OMA" id="YTQTPPW"/>
<dbReference type="OrthoDB" id="5969565at2759"/>
<dbReference type="PhylomeDB" id="O16867"/>
<dbReference type="BioGRID-ORCS" id="39935">
    <property type="hits" value="0 hits in 3 CRISPR screens"/>
</dbReference>
<dbReference type="GenomeRNAi" id="39935"/>
<dbReference type="PRO" id="PR:O16867"/>
<dbReference type="Proteomes" id="UP000000803">
    <property type="component" value="Chromosome 3L"/>
</dbReference>
<dbReference type="Bgee" id="FBgn0015550">
    <property type="expression patterns" value="Expressed in adult middle midgut class I enteroendocrine cell in adult midgut (Drosophila) and 37 other cell types or tissues"/>
</dbReference>
<dbReference type="GO" id="GO:0005634">
    <property type="term" value="C:nucleus"/>
    <property type="evidence" value="ECO:0000314"/>
    <property type="project" value="FlyBase"/>
</dbReference>
<dbReference type="GO" id="GO:0000981">
    <property type="term" value="F:DNA-binding transcription factor activity, RNA polymerase II-specific"/>
    <property type="evidence" value="ECO:0000314"/>
    <property type="project" value="FlyBase"/>
</dbReference>
<dbReference type="GO" id="GO:0070888">
    <property type="term" value="F:E-box binding"/>
    <property type="evidence" value="ECO:0000314"/>
    <property type="project" value="FlyBase"/>
</dbReference>
<dbReference type="GO" id="GO:0046983">
    <property type="term" value="F:protein dimerization activity"/>
    <property type="evidence" value="ECO:0007669"/>
    <property type="project" value="InterPro"/>
</dbReference>
<dbReference type="GO" id="GO:0061564">
    <property type="term" value="P:axon development"/>
    <property type="evidence" value="ECO:0000318"/>
    <property type="project" value="GO_Central"/>
</dbReference>
<dbReference type="GO" id="GO:0007411">
    <property type="term" value="P:axon guidance"/>
    <property type="evidence" value="ECO:0000315"/>
    <property type="project" value="FlyBase"/>
</dbReference>
<dbReference type="GO" id="GO:0007591">
    <property type="term" value="P:molting cycle, chitin-based cuticle"/>
    <property type="evidence" value="ECO:0000315"/>
    <property type="project" value="FlyBase"/>
</dbReference>
<dbReference type="GO" id="GO:0016319">
    <property type="term" value="P:mushroom body development"/>
    <property type="evidence" value="ECO:0000315"/>
    <property type="project" value="FlyBase"/>
</dbReference>
<dbReference type="GO" id="GO:0048843">
    <property type="term" value="P:negative regulation of axon extension involved in axon guidance"/>
    <property type="evidence" value="ECO:0000315"/>
    <property type="project" value="FlyBase"/>
</dbReference>
<dbReference type="GO" id="GO:0045944">
    <property type="term" value="P:positive regulation of transcription by RNA polymerase II"/>
    <property type="evidence" value="ECO:0000314"/>
    <property type="project" value="FlyBase"/>
</dbReference>
<dbReference type="GO" id="GO:0035074">
    <property type="term" value="P:pupation"/>
    <property type="evidence" value="ECO:0000315"/>
    <property type="project" value="FlyBase"/>
</dbReference>
<dbReference type="GO" id="GO:0007423">
    <property type="term" value="P:sensory organ development"/>
    <property type="evidence" value="ECO:0000318"/>
    <property type="project" value="GO_Central"/>
</dbReference>
<dbReference type="CDD" id="cd11428">
    <property type="entry name" value="bHLH_TS_NGN"/>
    <property type="match status" value="1"/>
</dbReference>
<dbReference type="FunFam" id="4.10.280.10:FF:000006">
    <property type="entry name" value="Neurogenic differentiation factor"/>
    <property type="match status" value="1"/>
</dbReference>
<dbReference type="Gene3D" id="4.10.280.10">
    <property type="entry name" value="Helix-loop-helix DNA-binding domain"/>
    <property type="match status" value="1"/>
</dbReference>
<dbReference type="InterPro" id="IPR011598">
    <property type="entry name" value="bHLH_dom"/>
</dbReference>
<dbReference type="InterPro" id="IPR050359">
    <property type="entry name" value="bHLH_transcription_factors"/>
</dbReference>
<dbReference type="InterPro" id="IPR036638">
    <property type="entry name" value="HLH_DNA-bd_sf"/>
</dbReference>
<dbReference type="PANTHER" id="PTHR19290:SF163">
    <property type="entry name" value="BASIC HELIX-LOOP-HELIX NEURAL TRANSCRIPTION FACTOR TAP"/>
    <property type="match status" value="1"/>
</dbReference>
<dbReference type="PANTHER" id="PTHR19290">
    <property type="entry name" value="BASIC HELIX-LOOP-HELIX PROTEIN NEUROGENIN-RELATED"/>
    <property type="match status" value="1"/>
</dbReference>
<dbReference type="Pfam" id="PF00010">
    <property type="entry name" value="HLH"/>
    <property type="match status" value="1"/>
</dbReference>
<dbReference type="SMART" id="SM00353">
    <property type="entry name" value="HLH"/>
    <property type="match status" value="1"/>
</dbReference>
<dbReference type="SUPFAM" id="SSF47459">
    <property type="entry name" value="HLH, helix-loop-helix DNA-binding domain"/>
    <property type="match status" value="1"/>
</dbReference>
<dbReference type="PROSITE" id="PS50888">
    <property type="entry name" value="BHLH"/>
    <property type="match status" value="1"/>
</dbReference>
<gene>
    <name type="primary">tap</name>
    <name type="synonym">bps</name>
    <name type="ORF">CG7659</name>
</gene>
<comment type="function">
    <text evidence="3 4 5">May play a role in the specification of the sugar-sensitive adult gustatory neuron and affect the response to sugar and salt. Regulated by POXN.</text>
</comment>
<comment type="interaction">
    <interactant intactId="EBI-102737">
        <id>O16867</id>
    </interactant>
    <interactant intactId="EBI-94554">
        <id>Q01069</id>
        <label>E(spl)mbeta-HLH</label>
    </interactant>
    <organismsDiffer>false</organismsDiffer>
    <experiments>3</experiments>
</comment>
<comment type="subcellular location">
    <subcellularLocation>
        <location evidence="1">Nucleus</location>
    </subcellularLocation>
</comment>
<comment type="tissue specificity">
    <text evidence="3 4 5">Expressed in neuronal and glial precursors during differentiation. In the peripheral nervous system, expression is exclusively in one of the neurons that innervate each larval chemosensory organ. Expressed at a late stage in the development of one type of adult chemosensory organ, the gustatory bristles of the leg, wing and proboscis. Expressed very early in the development of a second type of chemosensory receptors, the olfactory organs of the antenna.</text>
</comment>
<comment type="developmental stage">
    <text evidence="3">Expressed in embryos, expression continues to the final stages of neurogenesis.</text>
</comment>
<organism>
    <name type="scientific">Drosophila melanogaster</name>
    <name type="common">Fruit fly</name>
    <dbReference type="NCBI Taxonomy" id="7227"/>
    <lineage>
        <taxon>Eukaryota</taxon>
        <taxon>Metazoa</taxon>
        <taxon>Ecdysozoa</taxon>
        <taxon>Arthropoda</taxon>
        <taxon>Hexapoda</taxon>
        <taxon>Insecta</taxon>
        <taxon>Pterygota</taxon>
        <taxon>Neoptera</taxon>
        <taxon>Endopterygota</taxon>
        <taxon>Diptera</taxon>
        <taxon>Brachycera</taxon>
        <taxon>Muscomorpha</taxon>
        <taxon>Ephydroidea</taxon>
        <taxon>Drosophilidae</taxon>
        <taxon>Drosophila</taxon>
        <taxon>Sophophora</taxon>
    </lineage>
</organism>
<evidence type="ECO:0000255" key="1">
    <source>
        <dbReference type="PROSITE-ProRule" id="PRU00981"/>
    </source>
</evidence>
<evidence type="ECO:0000256" key="2">
    <source>
        <dbReference type="SAM" id="MobiDB-lite"/>
    </source>
</evidence>
<evidence type="ECO:0000269" key="3">
    <source>
    </source>
</evidence>
<evidence type="ECO:0000269" key="4">
    <source>
    </source>
</evidence>
<evidence type="ECO:0000269" key="5">
    <source>
    </source>
</evidence>
<proteinExistence type="evidence at protein level"/>
<name>TAP_DROME</name>
<sequence>MAACYNAYSAGSQSFEFDEDDDDASFDSGYEKSFETEAQLSSRRRLDFGTPPTPAIPQPYSGGTWDAVPLSSPPAGFVGLLDTSSNHSTRSGRTLVEHLNSRATNGVFDPPLTSTPVKSPEDPNAPRPKRKYAVGKNRVTRSRSPTQVVKIKRFRRMKANDRERNRMHNLNDALEKLRVTLPSLPEETKLTKIEILRFAHNYIFALEQVLESGGSINLDLEKLQNFTLSGERITKELFDALFVNPQPYPLFGRMFPYGQGMAPLAQHQTAPASHAEQPPAMGGFQHGMDYPQQPPGFDFTGSMRFYHQQQQQPHQPHHLQPNPQQESSPQQFSQEKYDLFRGSFDAAANLHSTNLDSGIHQQSSFYSQTPPWKDYPEDQAHVHPVPHQHSYKNFAPQV</sequence>
<accession>O16867</accession>
<accession>P91640</accession>
<accession>Q9VVF9</accession>
<reference key="1">
    <citation type="journal article" date="1996" name="Dev. Biol.">
        <title>Biparous: a novel bHLH gene expressed in neuronal and glial precursors in Drosophila.</title>
        <authorList>
            <person name="Bush A.B."/>
            <person name="Hiromi Y.H."/>
            <person name="Cole M.D."/>
        </authorList>
    </citation>
    <scope>NUCLEOTIDE SEQUENCE [MRNA]</scope>
    <scope>FUNCTION</scope>
    <scope>TISSUE SPECIFICITY</scope>
    <scope>DEVELOPMENTAL STAGE</scope>
</reference>
<reference key="2">
    <citation type="journal article" date="1997" name="Gene">
        <title>tap, a Drosophila bHLH gene expressed in chemosensory organs.</title>
        <authorList>
            <person name="Gautier P."/>
            <person name="Ledent V."/>
            <person name="Massaer M."/>
            <person name="Dambly-Chaudiere C."/>
            <person name="Ghysen A."/>
        </authorList>
    </citation>
    <scope>NUCLEOTIDE SEQUENCE [MRNA]</scope>
    <scope>FUNCTION</scope>
    <scope>TISSUE SPECIFICITY</scope>
    <source>
        <strain>Oregon-R</strain>
    </source>
</reference>
<reference key="3">
    <citation type="journal article" date="2000" name="Science">
        <title>The genome sequence of Drosophila melanogaster.</title>
        <authorList>
            <person name="Adams M.D."/>
            <person name="Celniker S.E."/>
            <person name="Holt R.A."/>
            <person name="Evans C.A."/>
            <person name="Gocayne J.D."/>
            <person name="Amanatides P.G."/>
            <person name="Scherer S.E."/>
            <person name="Li P.W."/>
            <person name="Hoskins R.A."/>
            <person name="Galle R.F."/>
            <person name="George R.A."/>
            <person name="Lewis S.E."/>
            <person name="Richards S."/>
            <person name="Ashburner M."/>
            <person name="Henderson S.N."/>
            <person name="Sutton G.G."/>
            <person name="Wortman J.R."/>
            <person name="Yandell M.D."/>
            <person name="Zhang Q."/>
            <person name="Chen L.X."/>
            <person name="Brandon R.C."/>
            <person name="Rogers Y.-H.C."/>
            <person name="Blazej R.G."/>
            <person name="Champe M."/>
            <person name="Pfeiffer B.D."/>
            <person name="Wan K.H."/>
            <person name="Doyle C."/>
            <person name="Baxter E.G."/>
            <person name="Helt G."/>
            <person name="Nelson C.R."/>
            <person name="Miklos G.L.G."/>
            <person name="Abril J.F."/>
            <person name="Agbayani A."/>
            <person name="An H.-J."/>
            <person name="Andrews-Pfannkoch C."/>
            <person name="Baldwin D."/>
            <person name="Ballew R.M."/>
            <person name="Basu A."/>
            <person name="Baxendale J."/>
            <person name="Bayraktaroglu L."/>
            <person name="Beasley E.M."/>
            <person name="Beeson K.Y."/>
            <person name="Benos P.V."/>
            <person name="Berman B.P."/>
            <person name="Bhandari D."/>
            <person name="Bolshakov S."/>
            <person name="Borkova D."/>
            <person name="Botchan M.R."/>
            <person name="Bouck J."/>
            <person name="Brokstein P."/>
            <person name="Brottier P."/>
            <person name="Burtis K.C."/>
            <person name="Busam D.A."/>
            <person name="Butler H."/>
            <person name="Cadieu E."/>
            <person name="Center A."/>
            <person name="Chandra I."/>
            <person name="Cherry J.M."/>
            <person name="Cawley S."/>
            <person name="Dahlke C."/>
            <person name="Davenport L.B."/>
            <person name="Davies P."/>
            <person name="de Pablos B."/>
            <person name="Delcher A."/>
            <person name="Deng Z."/>
            <person name="Mays A.D."/>
            <person name="Dew I."/>
            <person name="Dietz S.M."/>
            <person name="Dodson K."/>
            <person name="Doup L.E."/>
            <person name="Downes M."/>
            <person name="Dugan-Rocha S."/>
            <person name="Dunkov B.C."/>
            <person name="Dunn P."/>
            <person name="Durbin K.J."/>
            <person name="Evangelista C.C."/>
            <person name="Ferraz C."/>
            <person name="Ferriera S."/>
            <person name="Fleischmann W."/>
            <person name="Fosler C."/>
            <person name="Gabrielian A.E."/>
            <person name="Garg N.S."/>
            <person name="Gelbart W.M."/>
            <person name="Glasser K."/>
            <person name="Glodek A."/>
            <person name="Gong F."/>
            <person name="Gorrell J.H."/>
            <person name="Gu Z."/>
            <person name="Guan P."/>
            <person name="Harris M."/>
            <person name="Harris N.L."/>
            <person name="Harvey D.A."/>
            <person name="Heiman T.J."/>
            <person name="Hernandez J.R."/>
            <person name="Houck J."/>
            <person name="Hostin D."/>
            <person name="Houston K.A."/>
            <person name="Howland T.J."/>
            <person name="Wei M.-H."/>
            <person name="Ibegwam C."/>
            <person name="Jalali M."/>
            <person name="Kalush F."/>
            <person name="Karpen G.H."/>
            <person name="Ke Z."/>
            <person name="Kennison J.A."/>
            <person name="Ketchum K.A."/>
            <person name="Kimmel B.E."/>
            <person name="Kodira C.D."/>
            <person name="Kraft C.L."/>
            <person name="Kravitz S."/>
            <person name="Kulp D."/>
            <person name="Lai Z."/>
            <person name="Lasko P."/>
            <person name="Lei Y."/>
            <person name="Levitsky A.A."/>
            <person name="Li J.H."/>
            <person name="Li Z."/>
            <person name="Liang Y."/>
            <person name="Lin X."/>
            <person name="Liu X."/>
            <person name="Mattei B."/>
            <person name="McIntosh T.C."/>
            <person name="McLeod M.P."/>
            <person name="McPherson D."/>
            <person name="Merkulov G."/>
            <person name="Milshina N.V."/>
            <person name="Mobarry C."/>
            <person name="Morris J."/>
            <person name="Moshrefi A."/>
            <person name="Mount S.M."/>
            <person name="Moy M."/>
            <person name="Murphy B."/>
            <person name="Murphy L."/>
            <person name="Muzny D.M."/>
            <person name="Nelson D.L."/>
            <person name="Nelson D.R."/>
            <person name="Nelson K.A."/>
            <person name="Nixon K."/>
            <person name="Nusskern D.R."/>
            <person name="Pacleb J.M."/>
            <person name="Palazzolo M."/>
            <person name="Pittman G.S."/>
            <person name="Pan S."/>
            <person name="Pollard J."/>
            <person name="Puri V."/>
            <person name="Reese M.G."/>
            <person name="Reinert K."/>
            <person name="Remington K."/>
            <person name="Saunders R.D.C."/>
            <person name="Scheeler F."/>
            <person name="Shen H."/>
            <person name="Shue B.C."/>
            <person name="Siden-Kiamos I."/>
            <person name="Simpson M."/>
            <person name="Skupski M.P."/>
            <person name="Smith T.J."/>
            <person name="Spier E."/>
            <person name="Spradling A.C."/>
            <person name="Stapleton M."/>
            <person name="Strong R."/>
            <person name="Sun E."/>
            <person name="Svirskas R."/>
            <person name="Tector C."/>
            <person name="Turner R."/>
            <person name="Venter E."/>
            <person name="Wang A.H."/>
            <person name="Wang X."/>
            <person name="Wang Z.-Y."/>
            <person name="Wassarman D.A."/>
            <person name="Weinstock G.M."/>
            <person name="Weissenbach J."/>
            <person name="Williams S.M."/>
            <person name="Woodage T."/>
            <person name="Worley K.C."/>
            <person name="Wu D."/>
            <person name="Yang S."/>
            <person name="Yao Q.A."/>
            <person name="Ye J."/>
            <person name="Yeh R.-F."/>
            <person name="Zaveri J.S."/>
            <person name="Zhan M."/>
            <person name="Zhang G."/>
            <person name="Zhao Q."/>
            <person name="Zheng L."/>
            <person name="Zheng X.H."/>
            <person name="Zhong F.N."/>
            <person name="Zhong W."/>
            <person name="Zhou X."/>
            <person name="Zhu S.C."/>
            <person name="Zhu X."/>
            <person name="Smith H.O."/>
            <person name="Gibbs R.A."/>
            <person name="Myers E.W."/>
            <person name="Rubin G.M."/>
            <person name="Venter J.C."/>
        </authorList>
    </citation>
    <scope>NUCLEOTIDE SEQUENCE [LARGE SCALE GENOMIC DNA]</scope>
    <source>
        <strain>Berkeley</strain>
    </source>
</reference>
<reference key="4">
    <citation type="journal article" date="2002" name="Genome Biol.">
        <title>Annotation of the Drosophila melanogaster euchromatic genome: a systematic review.</title>
        <authorList>
            <person name="Misra S."/>
            <person name="Crosby M.A."/>
            <person name="Mungall C.J."/>
            <person name="Matthews B.B."/>
            <person name="Campbell K.S."/>
            <person name="Hradecky P."/>
            <person name="Huang Y."/>
            <person name="Kaminker J.S."/>
            <person name="Millburn G.H."/>
            <person name="Prochnik S.E."/>
            <person name="Smith C.D."/>
            <person name="Tupy J.L."/>
            <person name="Whitfield E.J."/>
            <person name="Bayraktaroglu L."/>
            <person name="Berman B.P."/>
            <person name="Bettencourt B.R."/>
            <person name="Celniker S.E."/>
            <person name="de Grey A.D.N.J."/>
            <person name="Drysdale R.A."/>
            <person name="Harris N.L."/>
            <person name="Richter J."/>
            <person name="Russo S."/>
            <person name="Schroeder A.J."/>
            <person name="Shu S.Q."/>
            <person name="Stapleton M."/>
            <person name="Yamada C."/>
            <person name="Ashburner M."/>
            <person name="Gelbart W.M."/>
            <person name="Rubin G.M."/>
            <person name="Lewis S.E."/>
        </authorList>
    </citation>
    <scope>GENOME REANNOTATION</scope>
    <source>
        <strain>Berkeley</strain>
    </source>
</reference>
<reference key="5">
    <citation type="journal article" date="2002" name="Genome Biol.">
        <title>A Drosophila full-length cDNA resource.</title>
        <authorList>
            <person name="Stapleton M."/>
            <person name="Carlson J.W."/>
            <person name="Brokstein P."/>
            <person name="Yu C."/>
            <person name="Champe M."/>
            <person name="George R.A."/>
            <person name="Guarin H."/>
            <person name="Kronmiller B."/>
            <person name="Pacleb J.M."/>
            <person name="Park S."/>
            <person name="Wan K.H."/>
            <person name="Rubin G.M."/>
            <person name="Celniker S.E."/>
        </authorList>
    </citation>
    <scope>NUCLEOTIDE SEQUENCE [LARGE SCALE MRNA]</scope>
    <source>
        <strain>Berkeley</strain>
        <tissue>Embryo</tissue>
    </source>
</reference>
<reference key="6">
    <citation type="journal article" date="1998" name="Int. J. Dev. Biol.">
        <title>Expression and function of tap in the gustatory and olfactory organs of Drosophila.</title>
        <authorList>
            <person name="Ledent V."/>
            <person name="Gaillard F."/>
            <person name="Gautier P."/>
            <person name="Ghysen A."/>
            <person name="Dambly-Chaudiere C."/>
        </authorList>
    </citation>
    <scope>FUNCTION</scope>
    <scope>TISSUE SPECIFICITY</scope>
    <source>
        <strain>Oregon-R</strain>
    </source>
</reference>